<sequence>MSIILIGFMGAGKSTVAKLLAEEFTDLDKLIEEEIEMPIATFFELFGEADFRKIENEVFELAVQKDIIIATGGGIIENPKNLNVLDRASRVVFLTADFDTLWKRISMDWQNVRPLAQDKEAAQLLFEKRMKDYSLVADLTIDVTDKSPEQIAELIREKWEIE</sequence>
<gene>
    <name evidence="1" type="primary">aroK</name>
    <name type="ordered locus">LACR_1906</name>
</gene>
<name>AROK_LACLS</name>
<dbReference type="EC" id="2.7.1.71" evidence="1"/>
<dbReference type="EMBL" id="CP000425">
    <property type="protein sequence ID" value="ABJ73390.1"/>
    <property type="molecule type" value="Genomic_DNA"/>
</dbReference>
<dbReference type="RefSeq" id="WP_011676738.1">
    <property type="nucleotide sequence ID" value="NC_008527.1"/>
</dbReference>
<dbReference type="SMR" id="Q02XD2"/>
<dbReference type="KEGG" id="llc:LACR_1906"/>
<dbReference type="HOGENOM" id="CLU_057607_4_3_9"/>
<dbReference type="UniPathway" id="UPA00053">
    <property type="reaction ID" value="UER00088"/>
</dbReference>
<dbReference type="Proteomes" id="UP000000240">
    <property type="component" value="Chromosome"/>
</dbReference>
<dbReference type="GO" id="GO:0005829">
    <property type="term" value="C:cytosol"/>
    <property type="evidence" value="ECO:0007669"/>
    <property type="project" value="TreeGrafter"/>
</dbReference>
<dbReference type="GO" id="GO:0005524">
    <property type="term" value="F:ATP binding"/>
    <property type="evidence" value="ECO:0007669"/>
    <property type="project" value="UniProtKB-UniRule"/>
</dbReference>
<dbReference type="GO" id="GO:0000287">
    <property type="term" value="F:magnesium ion binding"/>
    <property type="evidence" value="ECO:0007669"/>
    <property type="project" value="UniProtKB-UniRule"/>
</dbReference>
<dbReference type="GO" id="GO:0004765">
    <property type="term" value="F:shikimate kinase activity"/>
    <property type="evidence" value="ECO:0007669"/>
    <property type="project" value="UniProtKB-UniRule"/>
</dbReference>
<dbReference type="GO" id="GO:0008652">
    <property type="term" value="P:amino acid biosynthetic process"/>
    <property type="evidence" value="ECO:0007669"/>
    <property type="project" value="UniProtKB-KW"/>
</dbReference>
<dbReference type="GO" id="GO:0009073">
    <property type="term" value="P:aromatic amino acid family biosynthetic process"/>
    <property type="evidence" value="ECO:0007669"/>
    <property type="project" value="UniProtKB-KW"/>
</dbReference>
<dbReference type="GO" id="GO:0009423">
    <property type="term" value="P:chorismate biosynthetic process"/>
    <property type="evidence" value="ECO:0007669"/>
    <property type="project" value="UniProtKB-UniRule"/>
</dbReference>
<dbReference type="CDD" id="cd00464">
    <property type="entry name" value="SK"/>
    <property type="match status" value="1"/>
</dbReference>
<dbReference type="Gene3D" id="3.40.50.300">
    <property type="entry name" value="P-loop containing nucleotide triphosphate hydrolases"/>
    <property type="match status" value="1"/>
</dbReference>
<dbReference type="HAMAP" id="MF_00109">
    <property type="entry name" value="Shikimate_kinase"/>
    <property type="match status" value="1"/>
</dbReference>
<dbReference type="InterPro" id="IPR027417">
    <property type="entry name" value="P-loop_NTPase"/>
</dbReference>
<dbReference type="InterPro" id="IPR031322">
    <property type="entry name" value="Shikimate/glucono_kinase"/>
</dbReference>
<dbReference type="InterPro" id="IPR000623">
    <property type="entry name" value="Shikimate_kinase/TSH1"/>
</dbReference>
<dbReference type="InterPro" id="IPR023000">
    <property type="entry name" value="Shikimate_kinase_CS"/>
</dbReference>
<dbReference type="PANTHER" id="PTHR21087">
    <property type="entry name" value="SHIKIMATE KINASE"/>
    <property type="match status" value="1"/>
</dbReference>
<dbReference type="PANTHER" id="PTHR21087:SF16">
    <property type="entry name" value="SHIKIMATE KINASE 1, CHLOROPLASTIC"/>
    <property type="match status" value="1"/>
</dbReference>
<dbReference type="Pfam" id="PF01202">
    <property type="entry name" value="SKI"/>
    <property type="match status" value="1"/>
</dbReference>
<dbReference type="PRINTS" id="PR01100">
    <property type="entry name" value="SHIKIMTKNASE"/>
</dbReference>
<dbReference type="SUPFAM" id="SSF52540">
    <property type="entry name" value="P-loop containing nucleoside triphosphate hydrolases"/>
    <property type="match status" value="1"/>
</dbReference>
<dbReference type="PROSITE" id="PS01128">
    <property type="entry name" value="SHIKIMATE_KINASE"/>
    <property type="match status" value="1"/>
</dbReference>
<comment type="function">
    <text evidence="1">Catalyzes the specific phosphorylation of the 3-hydroxyl group of shikimic acid using ATP as a cosubstrate.</text>
</comment>
<comment type="catalytic activity">
    <reaction evidence="1">
        <text>shikimate + ATP = 3-phosphoshikimate + ADP + H(+)</text>
        <dbReference type="Rhea" id="RHEA:13121"/>
        <dbReference type="ChEBI" id="CHEBI:15378"/>
        <dbReference type="ChEBI" id="CHEBI:30616"/>
        <dbReference type="ChEBI" id="CHEBI:36208"/>
        <dbReference type="ChEBI" id="CHEBI:145989"/>
        <dbReference type="ChEBI" id="CHEBI:456216"/>
        <dbReference type="EC" id="2.7.1.71"/>
    </reaction>
</comment>
<comment type="cofactor">
    <cofactor evidence="1">
        <name>Mg(2+)</name>
        <dbReference type="ChEBI" id="CHEBI:18420"/>
    </cofactor>
    <text evidence="1">Binds 1 Mg(2+) ion per subunit.</text>
</comment>
<comment type="pathway">
    <text evidence="1">Metabolic intermediate biosynthesis; chorismate biosynthesis; chorismate from D-erythrose 4-phosphate and phosphoenolpyruvate: step 5/7.</text>
</comment>
<comment type="subunit">
    <text evidence="1">Monomer.</text>
</comment>
<comment type="subcellular location">
    <subcellularLocation>
        <location evidence="1">Cytoplasm</location>
    </subcellularLocation>
</comment>
<comment type="similarity">
    <text evidence="1">Belongs to the shikimate kinase family.</text>
</comment>
<organism>
    <name type="scientific">Lactococcus lactis subsp. cremoris (strain SK11)</name>
    <dbReference type="NCBI Taxonomy" id="272622"/>
    <lineage>
        <taxon>Bacteria</taxon>
        <taxon>Bacillati</taxon>
        <taxon>Bacillota</taxon>
        <taxon>Bacilli</taxon>
        <taxon>Lactobacillales</taxon>
        <taxon>Streptococcaceae</taxon>
        <taxon>Lactococcus</taxon>
        <taxon>Lactococcus cremoris subsp. cremoris</taxon>
    </lineage>
</organism>
<proteinExistence type="inferred from homology"/>
<keyword id="KW-0028">Amino-acid biosynthesis</keyword>
<keyword id="KW-0057">Aromatic amino acid biosynthesis</keyword>
<keyword id="KW-0067">ATP-binding</keyword>
<keyword id="KW-0963">Cytoplasm</keyword>
<keyword id="KW-0418">Kinase</keyword>
<keyword id="KW-0460">Magnesium</keyword>
<keyword id="KW-0479">Metal-binding</keyword>
<keyword id="KW-0547">Nucleotide-binding</keyword>
<keyword id="KW-0808">Transferase</keyword>
<feature type="chain" id="PRO_1000022978" description="Shikimate kinase">
    <location>
        <begin position="1"/>
        <end position="162"/>
    </location>
</feature>
<feature type="binding site" evidence="1">
    <location>
        <begin position="10"/>
        <end position="15"/>
    </location>
    <ligand>
        <name>ATP</name>
        <dbReference type="ChEBI" id="CHEBI:30616"/>
    </ligand>
</feature>
<feature type="binding site" evidence="1">
    <location>
        <position position="14"/>
    </location>
    <ligand>
        <name>Mg(2+)</name>
        <dbReference type="ChEBI" id="CHEBI:18420"/>
    </ligand>
</feature>
<feature type="binding site" evidence="1">
    <location>
        <position position="28"/>
    </location>
    <ligand>
        <name>substrate</name>
    </ligand>
</feature>
<feature type="binding site" evidence="1">
    <location>
        <position position="52"/>
    </location>
    <ligand>
        <name>substrate</name>
    </ligand>
</feature>
<feature type="binding site" evidence="1">
    <location>
        <position position="73"/>
    </location>
    <ligand>
        <name>substrate</name>
    </ligand>
</feature>
<feature type="binding site" evidence="1">
    <location>
        <position position="113"/>
    </location>
    <ligand>
        <name>ATP</name>
        <dbReference type="ChEBI" id="CHEBI:30616"/>
    </ligand>
</feature>
<feature type="binding site" evidence="1">
    <location>
        <position position="129"/>
    </location>
    <ligand>
        <name>substrate</name>
    </ligand>
</feature>
<reference key="1">
    <citation type="journal article" date="2006" name="Proc. Natl. Acad. Sci. U.S.A.">
        <title>Comparative genomics of the lactic acid bacteria.</title>
        <authorList>
            <person name="Makarova K.S."/>
            <person name="Slesarev A."/>
            <person name="Wolf Y.I."/>
            <person name="Sorokin A."/>
            <person name="Mirkin B."/>
            <person name="Koonin E.V."/>
            <person name="Pavlov A."/>
            <person name="Pavlova N."/>
            <person name="Karamychev V."/>
            <person name="Polouchine N."/>
            <person name="Shakhova V."/>
            <person name="Grigoriev I."/>
            <person name="Lou Y."/>
            <person name="Rohksar D."/>
            <person name="Lucas S."/>
            <person name="Huang K."/>
            <person name="Goodstein D.M."/>
            <person name="Hawkins T."/>
            <person name="Plengvidhya V."/>
            <person name="Welker D."/>
            <person name="Hughes J."/>
            <person name="Goh Y."/>
            <person name="Benson A."/>
            <person name="Baldwin K."/>
            <person name="Lee J.-H."/>
            <person name="Diaz-Muniz I."/>
            <person name="Dosti B."/>
            <person name="Smeianov V."/>
            <person name="Wechter W."/>
            <person name="Barabote R."/>
            <person name="Lorca G."/>
            <person name="Altermann E."/>
            <person name="Barrangou R."/>
            <person name="Ganesan B."/>
            <person name="Xie Y."/>
            <person name="Rawsthorne H."/>
            <person name="Tamir D."/>
            <person name="Parker C."/>
            <person name="Breidt F."/>
            <person name="Broadbent J.R."/>
            <person name="Hutkins R."/>
            <person name="O'Sullivan D."/>
            <person name="Steele J."/>
            <person name="Unlu G."/>
            <person name="Saier M.H. Jr."/>
            <person name="Klaenhammer T."/>
            <person name="Richardson P."/>
            <person name="Kozyavkin S."/>
            <person name="Weimer B.C."/>
            <person name="Mills D.A."/>
        </authorList>
    </citation>
    <scope>NUCLEOTIDE SEQUENCE [LARGE SCALE GENOMIC DNA]</scope>
    <source>
        <strain>SK11</strain>
    </source>
</reference>
<accession>Q02XD2</accession>
<evidence type="ECO:0000255" key="1">
    <source>
        <dbReference type="HAMAP-Rule" id="MF_00109"/>
    </source>
</evidence>
<protein>
    <recommendedName>
        <fullName evidence="1">Shikimate kinase</fullName>
        <shortName evidence="1">SK</shortName>
        <ecNumber evidence="1">2.7.1.71</ecNumber>
    </recommendedName>
</protein>